<proteinExistence type="inferred from homology"/>
<organism>
    <name type="scientific">Methanosarcina acetivorans (strain ATCC 35395 / DSM 2834 / JCM 12185 / C2A)</name>
    <dbReference type="NCBI Taxonomy" id="188937"/>
    <lineage>
        <taxon>Archaea</taxon>
        <taxon>Methanobacteriati</taxon>
        <taxon>Methanobacteriota</taxon>
        <taxon>Stenosarchaea group</taxon>
        <taxon>Methanomicrobia</taxon>
        <taxon>Methanosarcinales</taxon>
        <taxon>Methanosarcinaceae</taxon>
        <taxon>Methanosarcina</taxon>
    </lineage>
</organism>
<reference key="1">
    <citation type="journal article" date="2002" name="Genome Res.">
        <title>The genome of Methanosarcina acetivorans reveals extensive metabolic and physiological diversity.</title>
        <authorList>
            <person name="Galagan J.E."/>
            <person name="Nusbaum C."/>
            <person name="Roy A."/>
            <person name="Endrizzi M.G."/>
            <person name="Macdonald P."/>
            <person name="FitzHugh W."/>
            <person name="Calvo S."/>
            <person name="Engels R."/>
            <person name="Smirnov S."/>
            <person name="Atnoor D."/>
            <person name="Brown A."/>
            <person name="Allen N."/>
            <person name="Naylor J."/>
            <person name="Stange-Thomann N."/>
            <person name="DeArellano K."/>
            <person name="Johnson R."/>
            <person name="Linton L."/>
            <person name="McEwan P."/>
            <person name="McKernan K."/>
            <person name="Talamas J."/>
            <person name="Tirrell A."/>
            <person name="Ye W."/>
            <person name="Zimmer A."/>
            <person name="Barber R.D."/>
            <person name="Cann I."/>
            <person name="Graham D.E."/>
            <person name="Grahame D.A."/>
            <person name="Guss A.M."/>
            <person name="Hedderich R."/>
            <person name="Ingram-Smith C."/>
            <person name="Kuettner H.C."/>
            <person name="Krzycki J.A."/>
            <person name="Leigh J.A."/>
            <person name="Li W."/>
            <person name="Liu J."/>
            <person name="Mukhopadhyay B."/>
            <person name="Reeve J.N."/>
            <person name="Smith K."/>
            <person name="Springer T.A."/>
            <person name="Umayam L.A."/>
            <person name="White O."/>
            <person name="White R.H."/>
            <person name="de Macario E.C."/>
            <person name="Ferry J.G."/>
            <person name="Jarrell K.F."/>
            <person name="Jing H."/>
            <person name="Macario A.J.L."/>
            <person name="Paulsen I.T."/>
            <person name="Pritchett M."/>
            <person name="Sowers K.R."/>
            <person name="Swanson R.V."/>
            <person name="Zinder S.H."/>
            <person name="Lander E."/>
            <person name="Metcalf W.W."/>
            <person name="Birren B."/>
        </authorList>
    </citation>
    <scope>NUCLEOTIDE SEQUENCE [LARGE SCALE GENOMIC DNA]</scope>
    <source>
        <strain>ATCC 35395 / DSM 2834 / JCM 12185 / C2A</strain>
    </source>
</reference>
<protein>
    <recommendedName>
        <fullName evidence="1">Threonine--tRNA ligase</fullName>
        <ecNumber evidence="1">6.1.1.3</ecNumber>
    </recommendedName>
    <alternativeName>
        <fullName evidence="1">Threonyl-tRNA synthetase</fullName>
        <shortName evidence="1">ThrRS</shortName>
    </alternativeName>
</protein>
<gene>
    <name evidence="1" type="primary">thrS</name>
    <name type="ordered locus">MA_2896</name>
</gene>
<feature type="chain" id="PRO_0000101100" description="Threonine--tRNA ligase">
    <location>
        <begin position="1"/>
        <end position="635"/>
    </location>
</feature>
<feature type="region of interest" description="Editing domain" evidence="1">
    <location>
        <begin position="1"/>
        <end position="152"/>
    </location>
</feature>
<feature type="region of interest" description="Catalytic" evidence="1">
    <location>
        <begin position="215"/>
        <end position="514"/>
    </location>
</feature>
<feature type="binding site" evidence="1">
    <location>
        <position position="307"/>
    </location>
    <ligand>
        <name>Zn(2+)</name>
        <dbReference type="ChEBI" id="CHEBI:29105"/>
    </ligand>
</feature>
<feature type="binding site" evidence="1">
    <location>
        <position position="359"/>
    </location>
    <ligand>
        <name>Zn(2+)</name>
        <dbReference type="ChEBI" id="CHEBI:29105"/>
    </ligand>
</feature>
<feature type="binding site" evidence="1">
    <location>
        <position position="483"/>
    </location>
    <ligand>
        <name>Zn(2+)</name>
        <dbReference type="ChEBI" id="CHEBI:29105"/>
    </ligand>
</feature>
<sequence length="635" mass="72593">MQLLLIHSDYIEYETKKQTPVAEKIEESLKSGRLEEALTAFTAVESVDEANPEEAIEKAVSEIEKVAAQVKTNRIMLYPYAHLSSDLSSPKVAVQVLKGIEAALSGKYEVKRAPFGWYKAFTVSCKGHPLSELSRSIHPEGTAKAAVKPEAAGEKEEVVSEALKAEGTARSYWRILTPDGELHEVETFDLTPYPKLQQFVNYEISKSRAVERAPPHVELMRRLELADYEPGSDSGNMRYYPKGRLVKSLLENYVLDVATEFGAMEVETPLMYDMNHPTLKKYLDRFPARQYSIESDKRQMFLRFAACFGQFLMNHDMTISYKNLPLRMIEMTRYSFRKEQRGELVGLRRLRAFTMPDMHTLCEDMNQAVSQFKEQYDLCIDVLENVGIHIDDYEVAIRFTRDFYESNKELVVNMAKTVNKPVLVEMWDTRFFYFVLKFEFNFVDALAKASALSTVQIDVENAERYDISYVNADGKLERPIVLHCSPSGAIERCIYALLEKAAMETEEGKVPMLPVWLSPTQVRIVPISEKHLAFAEEVSKKLDCRVDIDDRDLSIGKKVREAGREWVPYVVVIGDKEMEEGTINVTVRAESEQNKPSKVQITPEELNARIRGEIAGKPYRKLPLAKYLSARPKFF</sequence>
<comment type="function">
    <text evidence="1">Catalyzes the attachment of threonine to tRNA(Thr) in a two-step reaction: L-threonine is first activated by ATP to form Thr-AMP and then transferred to the acceptor end of tRNA(Thr). Also edits incorrectly charged L-seryl-tRNA(Thr).</text>
</comment>
<comment type="catalytic activity">
    <reaction evidence="1">
        <text>tRNA(Thr) + L-threonine + ATP = L-threonyl-tRNA(Thr) + AMP + diphosphate + H(+)</text>
        <dbReference type="Rhea" id="RHEA:24624"/>
        <dbReference type="Rhea" id="RHEA-COMP:9670"/>
        <dbReference type="Rhea" id="RHEA-COMP:9704"/>
        <dbReference type="ChEBI" id="CHEBI:15378"/>
        <dbReference type="ChEBI" id="CHEBI:30616"/>
        <dbReference type="ChEBI" id="CHEBI:33019"/>
        <dbReference type="ChEBI" id="CHEBI:57926"/>
        <dbReference type="ChEBI" id="CHEBI:78442"/>
        <dbReference type="ChEBI" id="CHEBI:78534"/>
        <dbReference type="ChEBI" id="CHEBI:456215"/>
        <dbReference type="EC" id="6.1.1.3"/>
    </reaction>
</comment>
<comment type="cofactor">
    <cofactor evidence="1">
        <name>Zn(2+)</name>
        <dbReference type="ChEBI" id="CHEBI:29105"/>
    </cofactor>
    <text evidence="1">Binds 1 zinc ion per subunit.</text>
</comment>
<comment type="subunit">
    <text evidence="1">Homodimer.</text>
</comment>
<comment type="subcellular location">
    <subcellularLocation>
        <location evidence="1">Cytoplasm</location>
    </subcellularLocation>
</comment>
<comment type="domain">
    <text evidence="1">The N-terminal domain is an archaea-specific tRNA-editing domain that hydrolyzes incorrectly charged L-seryl-tRNA(Thr). Catalysis of tRNA editing is performed by the charged tRNA itself.</text>
</comment>
<comment type="similarity">
    <text evidence="1">Belongs to the class-II aminoacyl-tRNA synthetase family.</text>
</comment>
<name>SYT_METAC</name>
<accession>Q8TLX7</accession>
<dbReference type="EC" id="6.1.1.3" evidence="1"/>
<dbReference type="EMBL" id="AE010299">
    <property type="protein sequence ID" value="AAM06272.1"/>
    <property type="molecule type" value="Genomic_DNA"/>
</dbReference>
<dbReference type="RefSeq" id="WP_011022845.1">
    <property type="nucleotide sequence ID" value="NC_003552.1"/>
</dbReference>
<dbReference type="SMR" id="Q8TLX7"/>
<dbReference type="FunCoup" id="Q8TLX7">
    <property type="interactions" value="156"/>
</dbReference>
<dbReference type="STRING" id="188937.MA_2896"/>
<dbReference type="EnsemblBacteria" id="AAM06272">
    <property type="protein sequence ID" value="AAM06272"/>
    <property type="gene ID" value="MA_2896"/>
</dbReference>
<dbReference type="GeneID" id="1474792"/>
<dbReference type="KEGG" id="mac:MA_2896"/>
<dbReference type="HOGENOM" id="CLU_029833_0_0_2"/>
<dbReference type="InParanoid" id="Q8TLX7"/>
<dbReference type="OrthoDB" id="372136at2157"/>
<dbReference type="PhylomeDB" id="Q8TLX7"/>
<dbReference type="Proteomes" id="UP000002487">
    <property type="component" value="Chromosome"/>
</dbReference>
<dbReference type="GO" id="GO:0005737">
    <property type="term" value="C:cytoplasm"/>
    <property type="evidence" value="ECO:0007669"/>
    <property type="project" value="UniProtKB-SubCell"/>
</dbReference>
<dbReference type="GO" id="GO:0005524">
    <property type="term" value="F:ATP binding"/>
    <property type="evidence" value="ECO:0007669"/>
    <property type="project" value="UniProtKB-UniRule"/>
</dbReference>
<dbReference type="GO" id="GO:0004829">
    <property type="term" value="F:threonine-tRNA ligase activity"/>
    <property type="evidence" value="ECO:0000318"/>
    <property type="project" value="GO_Central"/>
</dbReference>
<dbReference type="GO" id="GO:0000049">
    <property type="term" value="F:tRNA binding"/>
    <property type="evidence" value="ECO:0007669"/>
    <property type="project" value="UniProtKB-KW"/>
</dbReference>
<dbReference type="GO" id="GO:0008270">
    <property type="term" value="F:zinc ion binding"/>
    <property type="evidence" value="ECO:0007669"/>
    <property type="project" value="InterPro"/>
</dbReference>
<dbReference type="GO" id="GO:0006435">
    <property type="term" value="P:threonyl-tRNA aminoacylation"/>
    <property type="evidence" value="ECO:0000318"/>
    <property type="project" value="GO_Central"/>
</dbReference>
<dbReference type="CDD" id="cd00860">
    <property type="entry name" value="ThrRS_anticodon"/>
    <property type="match status" value="1"/>
</dbReference>
<dbReference type="FunFam" id="3.30.930.10:FF:000076">
    <property type="entry name" value="Threonine--tRNA ligase"/>
    <property type="match status" value="1"/>
</dbReference>
<dbReference type="FunFam" id="3.40.50.800:FF:000001">
    <property type="entry name" value="Threonine--tRNA ligase"/>
    <property type="match status" value="1"/>
</dbReference>
<dbReference type="FunFam" id="3.50.80.10:FF:000004">
    <property type="entry name" value="Threonine--tRNA ligase"/>
    <property type="match status" value="1"/>
</dbReference>
<dbReference type="Gene3D" id="3.40.50.800">
    <property type="entry name" value="Anticodon-binding domain"/>
    <property type="match status" value="1"/>
</dbReference>
<dbReference type="Gene3D" id="3.30.930.10">
    <property type="entry name" value="Bira Bifunctional Protein, Domain 2"/>
    <property type="match status" value="1"/>
</dbReference>
<dbReference type="Gene3D" id="3.50.80.10">
    <property type="entry name" value="D-tyrosyl-tRNA(Tyr) deacylase"/>
    <property type="match status" value="1"/>
</dbReference>
<dbReference type="HAMAP" id="MF_00184">
    <property type="entry name" value="Thr_tRNA_synth"/>
    <property type="match status" value="1"/>
</dbReference>
<dbReference type="InterPro" id="IPR002314">
    <property type="entry name" value="aa-tRNA-synt_IIb"/>
</dbReference>
<dbReference type="InterPro" id="IPR006195">
    <property type="entry name" value="aa-tRNA-synth_II"/>
</dbReference>
<dbReference type="InterPro" id="IPR045864">
    <property type="entry name" value="aa-tRNA-synth_II/BPL/LPL"/>
</dbReference>
<dbReference type="InterPro" id="IPR004154">
    <property type="entry name" value="Anticodon-bd"/>
</dbReference>
<dbReference type="InterPro" id="IPR036621">
    <property type="entry name" value="Anticodon-bd_dom_sf"/>
</dbReference>
<dbReference type="InterPro" id="IPR023509">
    <property type="entry name" value="DTD-like_sf"/>
</dbReference>
<dbReference type="InterPro" id="IPR002320">
    <property type="entry name" value="Thr-tRNA-ligase_IIa"/>
</dbReference>
<dbReference type="InterPro" id="IPR015011">
    <property type="entry name" value="Threonyl-tRNA_syn_edit_dom_arc"/>
</dbReference>
<dbReference type="InterPro" id="IPR047246">
    <property type="entry name" value="ThrRS_anticodon"/>
</dbReference>
<dbReference type="NCBIfam" id="NF003068">
    <property type="entry name" value="PRK03991.1"/>
    <property type="match status" value="1"/>
</dbReference>
<dbReference type="NCBIfam" id="TIGR00418">
    <property type="entry name" value="thrS"/>
    <property type="match status" value="1"/>
</dbReference>
<dbReference type="PANTHER" id="PTHR11451:SF44">
    <property type="entry name" value="THREONINE--TRNA LIGASE, CHLOROPLASTIC_MITOCHONDRIAL 2"/>
    <property type="match status" value="1"/>
</dbReference>
<dbReference type="PANTHER" id="PTHR11451">
    <property type="entry name" value="THREONINE-TRNA LIGASE"/>
    <property type="match status" value="1"/>
</dbReference>
<dbReference type="Pfam" id="PF03129">
    <property type="entry name" value="HGTP_anticodon"/>
    <property type="match status" value="1"/>
</dbReference>
<dbReference type="Pfam" id="PF00587">
    <property type="entry name" value="tRNA-synt_2b"/>
    <property type="match status" value="1"/>
</dbReference>
<dbReference type="Pfam" id="PF08915">
    <property type="entry name" value="tRNA-Thr_ED"/>
    <property type="match status" value="1"/>
</dbReference>
<dbReference type="PRINTS" id="PR01047">
    <property type="entry name" value="TRNASYNTHTHR"/>
</dbReference>
<dbReference type="SUPFAM" id="SSF52954">
    <property type="entry name" value="Class II aaRS ABD-related"/>
    <property type="match status" value="1"/>
</dbReference>
<dbReference type="SUPFAM" id="SSF55681">
    <property type="entry name" value="Class II aaRS and biotin synthetases"/>
    <property type="match status" value="1"/>
</dbReference>
<dbReference type="PROSITE" id="PS50862">
    <property type="entry name" value="AA_TRNA_LIGASE_II"/>
    <property type="match status" value="1"/>
</dbReference>
<evidence type="ECO:0000255" key="1">
    <source>
        <dbReference type="HAMAP-Rule" id="MF_00184"/>
    </source>
</evidence>
<keyword id="KW-0030">Aminoacyl-tRNA synthetase</keyword>
<keyword id="KW-0067">ATP-binding</keyword>
<keyword id="KW-0963">Cytoplasm</keyword>
<keyword id="KW-0436">Ligase</keyword>
<keyword id="KW-0479">Metal-binding</keyword>
<keyword id="KW-0547">Nucleotide-binding</keyword>
<keyword id="KW-0648">Protein biosynthesis</keyword>
<keyword id="KW-1185">Reference proteome</keyword>
<keyword id="KW-0694">RNA-binding</keyword>
<keyword id="KW-0820">tRNA-binding</keyword>
<keyword id="KW-0862">Zinc</keyword>